<sequence length="233" mass="24971">MPKRGKKYLEALKLVDRSKAYPIAEAIELVKKTNVAKFDATVEVAFRLGVDPKKADQQIRGAVVLPHGTGKVARVLVFAKGEKAKEAEAAGADYVGDTEYINKIQQGWFDFDVVVATPDMMGEVGKLGRILGPKGLMPDPKTGTVTFDVAKAVQEIKAGKVEYRVDKAGNIHVPIGKVSFDNEKLAENFAAVYEALIKAKPAAAKGTYVKNVTITSTMGPGIKVDPTTVAVAQ</sequence>
<proteinExistence type="evidence at protein level"/>
<name>RL1_GEOSE</name>
<organism>
    <name type="scientific">Geobacillus stearothermophilus</name>
    <name type="common">Bacillus stearothermophilus</name>
    <dbReference type="NCBI Taxonomy" id="1422"/>
    <lineage>
        <taxon>Bacteria</taxon>
        <taxon>Bacillati</taxon>
        <taxon>Bacillota</taxon>
        <taxon>Bacilli</taxon>
        <taxon>Bacillales</taxon>
        <taxon>Anoxybacillaceae</taxon>
        <taxon>Geobacillus</taxon>
    </lineage>
</organism>
<reference key="1">
    <citation type="journal article" date="1985" name="Eur. J. Biochem.">
        <title>The complete primary structure of ribosomal proteins L1, L14, L15, L23, L24 and L29 from Bacillus stearothermophilus.</title>
        <authorList>
            <person name="Kimura M."/>
            <person name="Kimura J."/>
            <person name="Ashman K."/>
        </authorList>
    </citation>
    <scope>PROTEIN SEQUENCE OF 2-233</scope>
</reference>
<dbReference type="PIR" id="A02755">
    <property type="entry name" value="R5BS1"/>
</dbReference>
<dbReference type="SMR" id="P04447"/>
<dbReference type="GO" id="GO:0015934">
    <property type="term" value="C:large ribosomal subunit"/>
    <property type="evidence" value="ECO:0007669"/>
    <property type="project" value="InterPro"/>
</dbReference>
<dbReference type="GO" id="GO:0019843">
    <property type="term" value="F:rRNA binding"/>
    <property type="evidence" value="ECO:0007669"/>
    <property type="project" value="UniProtKB-UniRule"/>
</dbReference>
<dbReference type="GO" id="GO:0003735">
    <property type="term" value="F:structural constituent of ribosome"/>
    <property type="evidence" value="ECO:0007669"/>
    <property type="project" value="InterPro"/>
</dbReference>
<dbReference type="GO" id="GO:0000049">
    <property type="term" value="F:tRNA binding"/>
    <property type="evidence" value="ECO:0007669"/>
    <property type="project" value="UniProtKB-KW"/>
</dbReference>
<dbReference type="GO" id="GO:0006417">
    <property type="term" value="P:regulation of translation"/>
    <property type="evidence" value="ECO:0007669"/>
    <property type="project" value="UniProtKB-KW"/>
</dbReference>
<dbReference type="GO" id="GO:0006412">
    <property type="term" value="P:translation"/>
    <property type="evidence" value="ECO:0007669"/>
    <property type="project" value="UniProtKB-UniRule"/>
</dbReference>
<dbReference type="CDD" id="cd00403">
    <property type="entry name" value="Ribosomal_L1"/>
    <property type="match status" value="1"/>
</dbReference>
<dbReference type="FunFam" id="3.40.50.790:FF:000001">
    <property type="entry name" value="50S ribosomal protein L1"/>
    <property type="match status" value="1"/>
</dbReference>
<dbReference type="Gene3D" id="3.30.190.20">
    <property type="match status" value="1"/>
</dbReference>
<dbReference type="Gene3D" id="3.40.50.790">
    <property type="match status" value="1"/>
</dbReference>
<dbReference type="HAMAP" id="MF_01318_B">
    <property type="entry name" value="Ribosomal_uL1_B"/>
    <property type="match status" value="1"/>
</dbReference>
<dbReference type="InterPro" id="IPR005878">
    <property type="entry name" value="Ribosom_uL1_bac-type"/>
</dbReference>
<dbReference type="InterPro" id="IPR002143">
    <property type="entry name" value="Ribosomal_uL1"/>
</dbReference>
<dbReference type="InterPro" id="IPR023674">
    <property type="entry name" value="Ribosomal_uL1-like"/>
</dbReference>
<dbReference type="InterPro" id="IPR028364">
    <property type="entry name" value="Ribosomal_uL1/biogenesis"/>
</dbReference>
<dbReference type="InterPro" id="IPR016095">
    <property type="entry name" value="Ribosomal_uL1_3-a/b-sand"/>
</dbReference>
<dbReference type="InterPro" id="IPR023673">
    <property type="entry name" value="Ribosomal_uL1_CS"/>
</dbReference>
<dbReference type="NCBIfam" id="TIGR01169">
    <property type="entry name" value="rplA_bact"/>
    <property type="match status" value="1"/>
</dbReference>
<dbReference type="PANTHER" id="PTHR36427">
    <property type="entry name" value="54S RIBOSOMAL PROTEIN L1, MITOCHONDRIAL"/>
    <property type="match status" value="1"/>
</dbReference>
<dbReference type="PANTHER" id="PTHR36427:SF3">
    <property type="entry name" value="LARGE RIBOSOMAL SUBUNIT PROTEIN UL1M"/>
    <property type="match status" value="1"/>
</dbReference>
<dbReference type="Pfam" id="PF00687">
    <property type="entry name" value="Ribosomal_L1"/>
    <property type="match status" value="1"/>
</dbReference>
<dbReference type="PIRSF" id="PIRSF002155">
    <property type="entry name" value="Ribosomal_L1"/>
    <property type="match status" value="1"/>
</dbReference>
<dbReference type="SUPFAM" id="SSF56808">
    <property type="entry name" value="Ribosomal protein L1"/>
    <property type="match status" value="1"/>
</dbReference>
<dbReference type="PROSITE" id="PS01199">
    <property type="entry name" value="RIBOSOMAL_L1"/>
    <property type="match status" value="1"/>
</dbReference>
<accession>P04447</accession>
<evidence type="ECO:0000255" key="1">
    <source>
        <dbReference type="HAMAP-Rule" id="MF_01318"/>
    </source>
</evidence>
<evidence type="ECO:0000269" key="2">
    <source>
    </source>
</evidence>
<evidence type="ECO:0000305" key="3"/>
<keyword id="KW-0903">Direct protein sequencing</keyword>
<keyword id="KW-0678">Repressor</keyword>
<keyword id="KW-0687">Ribonucleoprotein</keyword>
<keyword id="KW-0689">Ribosomal protein</keyword>
<keyword id="KW-0694">RNA-binding</keyword>
<keyword id="KW-0699">rRNA-binding</keyword>
<keyword id="KW-0810">Translation regulation</keyword>
<keyword id="KW-0820">tRNA-binding</keyword>
<comment type="function">
    <text evidence="1">Binds directly to 23S rRNA. The L1 stalk is quite mobile in the ribosome, and is involved in E site tRNA release.</text>
</comment>
<comment type="function">
    <text evidence="1">Protein L1 is also a translational repressor protein, it controls the translation of the L11 operon by binding to its mRNA.</text>
</comment>
<comment type="subunit">
    <text evidence="1">Part of the 50S ribosomal subunit.</text>
</comment>
<comment type="similarity">
    <text evidence="1">Belongs to the universal ribosomal protein uL1 family.</text>
</comment>
<gene>
    <name evidence="1" type="primary">rplA</name>
</gene>
<protein>
    <recommendedName>
        <fullName evidence="1">Large ribosomal subunit protein uL1</fullName>
    </recommendedName>
    <alternativeName>
        <fullName evidence="3">50S ribosomal protein L1</fullName>
    </alternativeName>
</protein>
<feature type="initiator methionine" description="Removed" evidence="2">
    <location>
        <position position="1"/>
    </location>
</feature>
<feature type="chain" id="PRO_0000125615" description="Large ribosomal subunit protein uL1">
    <location>
        <begin position="2"/>
        <end position="233"/>
    </location>
</feature>